<comment type="similarity">
    <text evidence="1">Belongs to the bacterial ribosomal protein bL36 family.</text>
</comment>
<comment type="sequence caution" evidence="2">
    <conflict type="erroneous initiation">
        <sequence resource="EMBL-CDS" id="BAB99926"/>
    </conflict>
</comment>
<protein>
    <recommendedName>
        <fullName evidence="1">Large ribosomal subunit protein bL36</fullName>
    </recommendedName>
    <alternativeName>
        <fullName evidence="2">50S ribosomal protein L36</fullName>
    </alternativeName>
</protein>
<evidence type="ECO:0000255" key="1">
    <source>
        <dbReference type="HAMAP-Rule" id="MF_00251"/>
    </source>
</evidence>
<evidence type="ECO:0000305" key="2"/>
<organism>
    <name type="scientific">Corynebacterium glutamicum (strain ATCC 13032 / DSM 20300 / JCM 1318 / BCRC 11384 / CCUG 27702 / LMG 3730 / NBRC 12168 / NCIMB 10025 / NRRL B-2784 / 534)</name>
    <dbReference type="NCBI Taxonomy" id="196627"/>
    <lineage>
        <taxon>Bacteria</taxon>
        <taxon>Bacillati</taxon>
        <taxon>Actinomycetota</taxon>
        <taxon>Actinomycetes</taxon>
        <taxon>Mycobacteriales</taxon>
        <taxon>Corynebacteriaceae</taxon>
        <taxon>Corynebacterium</taxon>
    </lineage>
</organism>
<name>RL36_CORGL</name>
<reference key="1">
    <citation type="journal article" date="2003" name="Appl. Microbiol. Biotechnol.">
        <title>The Corynebacterium glutamicum genome: features and impacts on biotechnological processes.</title>
        <authorList>
            <person name="Ikeda M."/>
            <person name="Nakagawa S."/>
        </authorList>
    </citation>
    <scope>NUCLEOTIDE SEQUENCE [LARGE SCALE GENOMIC DNA]</scope>
    <source>
        <strain>ATCC 13032 / DSM 20300 / JCM 1318 / BCRC 11384 / CCUG 27702 / LMG 3730 / NBRC 12168 / NCIMB 10025 / NRRL B-2784 / 534</strain>
    </source>
</reference>
<reference key="2">
    <citation type="journal article" date="2003" name="J. Biotechnol.">
        <title>The complete Corynebacterium glutamicum ATCC 13032 genome sequence and its impact on the production of L-aspartate-derived amino acids and vitamins.</title>
        <authorList>
            <person name="Kalinowski J."/>
            <person name="Bathe B."/>
            <person name="Bartels D."/>
            <person name="Bischoff N."/>
            <person name="Bott M."/>
            <person name="Burkovski A."/>
            <person name="Dusch N."/>
            <person name="Eggeling L."/>
            <person name="Eikmanns B.J."/>
            <person name="Gaigalat L."/>
            <person name="Goesmann A."/>
            <person name="Hartmann M."/>
            <person name="Huthmacher K."/>
            <person name="Kraemer R."/>
            <person name="Linke B."/>
            <person name="McHardy A.C."/>
            <person name="Meyer F."/>
            <person name="Moeckel B."/>
            <person name="Pfefferle W."/>
            <person name="Puehler A."/>
            <person name="Rey D.A."/>
            <person name="Rueckert C."/>
            <person name="Rupp O."/>
            <person name="Sahm H."/>
            <person name="Wendisch V.F."/>
            <person name="Wiegraebe I."/>
            <person name="Tauch A."/>
        </authorList>
    </citation>
    <scope>NUCLEOTIDE SEQUENCE [LARGE SCALE GENOMIC DNA]</scope>
    <source>
        <strain>ATCC 13032 / DSM 20300 / JCM 1318 / BCRC 11384 / CCUG 27702 / LMG 3730 / NBRC 12168 / NCIMB 10025 / NRRL B-2784 / 534</strain>
    </source>
</reference>
<dbReference type="EMBL" id="BA000036">
    <property type="protein sequence ID" value="BAB99926.1"/>
    <property type="status" value="ALT_INIT"/>
    <property type="molecule type" value="Genomic_DNA"/>
</dbReference>
<dbReference type="EMBL" id="BX927155">
    <property type="protein sequence ID" value="CAF21195.1"/>
    <property type="molecule type" value="Genomic_DNA"/>
</dbReference>
<dbReference type="RefSeq" id="YP_008998238.1">
    <property type="nucleotide sequence ID" value="NC_003450.3"/>
</dbReference>
<dbReference type="SMR" id="P61173"/>
<dbReference type="STRING" id="196627.cg2791"/>
<dbReference type="KEGG" id="cgb:cg2791"/>
<dbReference type="KEGG" id="cgl:Cgl2533"/>
<dbReference type="eggNOG" id="COG0257">
    <property type="taxonomic scope" value="Bacteria"/>
</dbReference>
<dbReference type="HOGENOM" id="CLU_135723_3_1_11"/>
<dbReference type="OrthoDB" id="9801558at2"/>
<dbReference type="BioCyc" id="CORYNE:G18NG-12137-MONOMER"/>
<dbReference type="Proteomes" id="UP000000582">
    <property type="component" value="Chromosome"/>
</dbReference>
<dbReference type="Proteomes" id="UP000001009">
    <property type="component" value="Chromosome"/>
</dbReference>
<dbReference type="GO" id="GO:1990904">
    <property type="term" value="C:ribonucleoprotein complex"/>
    <property type="evidence" value="ECO:0007669"/>
    <property type="project" value="UniProtKB-KW"/>
</dbReference>
<dbReference type="GO" id="GO:0005840">
    <property type="term" value="C:ribosome"/>
    <property type="evidence" value="ECO:0007669"/>
    <property type="project" value="UniProtKB-KW"/>
</dbReference>
<dbReference type="GO" id="GO:0003735">
    <property type="term" value="F:structural constituent of ribosome"/>
    <property type="evidence" value="ECO:0007669"/>
    <property type="project" value="InterPro"/>
</dbReference>
<dbReference type="GO" id="GO:0006412">
    <property type="term" value="P:translation"/>
    <property type="evidence" value="ECO:0007669"/>
    <property type="project" value="UniProtKB-UniRule"/>
</dbReference>
<dbReference type="HAMAP" id="MF_00251">
    <property type="entry name" value="Ribosomal_bL36"/>
    <property type="match status" value="1"/>
</dbReference>
<dbReference type="InterPro" id="IPR000473">
    <property type="entry name" value="Ribosomal_bL36"/>
</dbReference>
<dbReference type="InterPro" id="IPR035977">
    <property type="entry name" value="Ribosomal_bL36_sp"/>
</dbReference>
<dbReference type="InterPro" id="IPR047621">
    <property type="entry name" value="Ribosomal_L36_bact"/>
</dbReference>
<dbReference type="NCBIfam" id="NF002021">
    <property type="entry name" value="PRK00831.1"/>
    <property type="match status" value="1"/>
</dbReference>
<dbReference type="NCBIfam" id="TIGR01022">
    <property type="entry name" value="rpmJ_bact"/>
    <property type="match status" value="1"/>
</dbReference>
<dbReference type="PANTHER" id="PTHR47781">
    <property type="entry name" value="50S RIBOSOMAL PROTEIN L36 2"/>
    <property type="match status" value="1"/>
</dbReference>
<dbReference type="PANTHER" id="PTHR47781:SF1">
    <property type="entry name" value="LARGE RIBOSOMAL SUBUNIT PROTEIN BL36B"/>
    <property type="match status" value="1"/>
</dbReference>
<dbReference type="Pfam" id="PF00444">
    <property type="entry name" value="Ribosomal_L36"/>
    <property type="match status" value="1"/>
</dbReference>
<dbReference type="SUPFAM" id="SSF57840">
    <property type="entry name" value="Ribosomal protein L36"/>
    <property type="match status" value="1"/>
</dbReference>
<feature type="chain" id="PRO_0000126179" description="Large ribosomal subunit protein bL36">
    <location>
        <begin position="1"/>
        <end position="40"/>
    </location>
</feature>
<sequence length="40" mass="4695">MKVRNSLRSLKNKPGAQVVRRRGKVYVINKKEPRFKARQG</sequence>
<accession>P61173</accession>
<accession>Q8NMN8</accession>
<proteinExistence type="inferred from homology"/>
<keyword id="KW-1185">Reference proteome</keyword>
<keyword id="KW-0687">Ribonucleoprotein</keyword>
<keyword id="KW-0689">Ribosomal protein</keyword>
<gene>
    <name evidence="1" type="primary">rpmJ</name>
    <name type="ordered locus">Cgl2533</name>
    <name type="ordered locus">cg2791</name>
</gene>